<proteinExistence type="inferred from homology"/>
<keyword id="KW-0320">Glycogen biosynthesis</keyword>
<keyword id="KW-0328">Glycosyltransferase</keyword>
<keyword id="KW-0808">Transferase</keyword>
<accession>Q3KD65</accession>
<name>GLGA_PSEPF</name>
<feature type="chain" id="PRO_0000230257" description="Glycogen synthase">
    <location>
        <begin position="1"/>
        <end position="487"/>
    </location>
</feature>
<feature type="binding site" evidence="1">
    <location>
        <position position="23"/>
    </location>
    <ligand>
        <name>ADP-alpha-D-glucose</name>
        <dbReference type="ChEBI" id="CHEBI:57498"/>
    </ligand>
</feature>
<gene>
    <name evidence="1" type="primary">glgA</name>
    <name type="ordered locus">Pfl01_2549</name>
</gene>
<protein>
    <recommendedName>
        <fullName evidence="1">Glycogen synthase</fullName>
        <ecNumber evidence="1">2.4.1.21</ecNumber>
    </recommendedName>
    <alternativeName>
        <fullName evidence="1">Starch [bacterial glycogen] synthase</fullName>
    </alternativeName>
</protein>
<reference key="1">
    <citation type="journal article" date="2009" name="Genome Biol.">
        <title>Genomic and genetic analyses of diversity and plant interactions of Pseudomonas fluorescens.</title>
        <authorList>
            <person name="Silby M.W."/>
            <person name="Cerdeno-Tarraga A.M."/>
            <person name="Vernikos G.S."/>
            <person name="Giddens S.R."/>
            <person name="Jackson R.W."/>
            <person name="Preston G.M."/>
            <person name="Zhang X.-X."/>
            <person name="Moon C.D."/>
            <person name="Gehrig S.M."/>
            <person name="Godfrey S.A.C."/>
            <person name="Knight C.G."/>
            <person name="Malone J.G."/>
            <person name="Robinson Z."/>
            <person name="Spiers A.J."/>
            <person name="Harris S."/>
            <person name="Challis G.L."/>
            <person name="Yaxley A.M."/>
            <person name="Harris D."/>
            <person name="Seeger K."/>
            <person name="Murphy L."/>
            <person name="Rutter S."/>
            <person name="Squares R."/>
            <person name="Quail M.A."/>
            <person name="Saunders E."/>
            <person name="Mavromatis K."/>
            <person name="Brettin T.S."/>
            <person name="Bentley S.D."/>
            <person name="Hothersall J."/>
            <person name="Stephens E."/>
            <person name="Thomas C.M."/>
            <person name="Parkhill J."/>
            <person name="Levy S.B."/>
            <person name="Rainey P.B."/>
            <person name="Thomson N.R."/>
        </authorList>
    </citation>
    <scope>NUCLEOTIDE SEQUENCE [LARGE SCALE GENOMIC DNA]</scope>
    <source>
        <strain>Pf0-1</strain>
    </source>
</reference>
<dbReference type="EC" id="2.4.1.21" evidence="1"/>
<dbReference type="EMBL" id="CP000094">
    <property type="protein sequence ID" value="ABA74290.1"/>
    <property type="status" value="ALT_INIT"/>
    <property type="molecule type" value="Genomic_DNA"/>
</dbReference>
<dbReference type="RefSeq" id="WP_011333968.1">
    <property type="nucleotide sequence ID" value="NC_007492.2"/>
</dbReference>
<dbReference type="SMR" id="Q3KD65"/>
<dbReference type="CAZy" id="GT5">
    <property type="family name" value="Glycosyltransferase Family 5"/>
</dbReference>
<dbReference type="KEGG" id="pfo:Pfl01_2549"/>
<dbReference type="eggNOG" id="COG0297">
    <property type="taxonomic scope" value="Bacteria"/>
</dbReference>
<dbReference type="HOGENOM" id="CLU_009583_18_4_6"/>
<dbReference type="UniPathway" id="UPA00164"/>
<dbReference type="Proteomes" id="UP000002704">
    <property type="component" value="Chromosome"/>
</dbReference>
<dbReference type="GO" id="GO:0009011">
    <property type="term" value="F:alpha-1,4-glucan glucosyltransferase (ADP-glucose donor) activity"/>
    <property type="evidence" value="ECO:0007669"/>
    <property type="project" value="UniProtKB-UniRule"/>
</dbReference>
<dbReference type="GO" id="GO:0004373">
    <property type="term" value="F:alpha-1,4-glucan glucosyltransferase (UDP-glucose donor) activity"/>
    <property type="evidence" value="ECO:0007669"/>
    <property type="project" value="InterPro"/>
</dbReference>
<dbReference type="GO" id="GO:0005978">
    <property type="term" value="P:glycogen biosynthetic process"/>
    <property type="evidence" value="ECO:0007669"/>
    <property type="project" value="UniProtKB-UniRule"/>
</dbReference>
<dbReference type="CDD" id="cd03791">
    <property type="entry name" value="GT5_Glycogen_synthase_DULL1-like"/>
    <property type="match status" value="1"/>
</dbReference>
<dbReference type="Gene3D" id="3.40.50.2000">
    <property type="entry name" value="Glycogen Phosphorylase B"/>
    <property type="match status" value="2"/>
</dbReference>
<dbReference type="HAMAP" id="MF_00484">
    <property type="entry name" value="Glycogen_synth"/>
    <property type="match status" value="1"/>
</dbReference>
<dbReference type="InterPro" id="IPR001296">
    <property type="entry name" value="Glyco_trans_1"/>
</dbReference>
<dbReference type="InterPro" id="IPR011835">
    <property type="entry name" value="GS/SS"/>
</dbReference>
<dbReference type="InterPro" id="IPR013534">
    <property type="entry name" value="Starch_synth_cat_dom"/>
</dbReference>
<dbReference type="NCBIfam" id="TIGR02095">
    <property type="entry name" value="glgA"/>
    <property type="match status" value="1"/>
</dbReference>
<dbReference type="NCBIfam" id="NF001899">
    <property type="entry name" value="PRK00654.1-2"/>
    <property type="match status" value="1"/>
</dbReference>
<dbReference type="NCBIfam" id="NF001901">
    <property type="entry name" value="PRK00654.1-5"/>
    <property type="match status" value="1"/>
</dbReference>
<dbReference type="PANTHER" id="PTHR45825:SF8">
    <property type="entry name" value="GLYCOGEN SYNTHASE"/>
    <property type="match status" value="1"/>
</dbReference>
<dbReference type="PANTHER" id="PTHR45825">
    <property type="entry name" value="GRANULE-BOUND STARCH SYNTHASE 1, CHLOROPLASTIC/AMYLOPLASTIC"/>
    <property type="match status" value="1"/>
</dbReference>
<dbReference type="Pfam" id="PF08323">
    <property type="entry name" value="Glyco_transf_5"/>
    <property type="match status" value="1"/>
</dbReference>
<dbReference type="Pfam" id="PF00534">
    <property type="entry name" value="Glycos_transf_1"/>
    <property type="match status" value="1"/>
</dbReference>
<dbReference type="SUPFAM" id="SSF53756">
    <property type="entry name" value="UDP-Glycosyltransferase/glycogen phosphorylase"/>
    <property type="match status" value="1"/>
</dbReference>
<evidence type="ECO:0000255" key="1">
    <source>
        <dbReference type="HAMAP-Rule" id="MF_00484"/>
    </source>
</evidence>
<evidence type="ECO:0000305" key="2"/>
<sequence length="487" mass="53003">MASQNPNKKKVLFVTSEIADLVKTGGLGDVSAALPRAMAHLHDVRVLIPGYPQVMNSENPIHIIGELGGHAALPPCKIGRMDMPDGLVIYVLICPELYARDGGPYGANNGRDWPDNHIRFARLGLAAADIAANLAQIHWCPDLVHAHDWPAGLAPAYMHWRGQRTPTLFTIHNLAYQGVTSLGSCPELGIPAHALQQEGMEFYGKMSFLKAGMAYSSHITTVSATYAQEITTPDFGCGLDGFLAAKTQQGLLSGIPNGIDESWDAATDPHLFAPFAIGDWEGKAINAAHVRELFGLKDSEGPLFAVVSRLVYQKGLDLTEAVSEYIVQNGGQIAIIGRGEPEEEQAMRELALRFPGQIGVRIGFNETDARRMFAGSDFLLMPSRYEPCGLSQMYAQRFGSLPVARNTGGLADTIENGVTGFLFNESTADSYREALSRAFKVFAFPELLNAMRCRAMAAPFNWCKAVEPYAELYEKLVAKALGKTHHK</sequence>
<comment type="function">
    <text evidence="1">Synthesizes alpha-1,4-glucan chains using ADP-glucose.</text>
</comment>
<comment type="catalytic activity">
    <reaction evidence="1">
        <text>[(1-&gt;4)-alpha-D-glucosyl](n) + ADP-alpha-D-glucose = [(1-&gt;4)-alpha-D-glucosyl](n+1) + ADP + H(+)</text>
        <dbReference type="Rhea" id="RHEA:18189"/>
        <dbReference type="Rhea" id="RHEA-COMP:9584"/>
        <dbReference type="Rhea" id="RHEA-COMP:9587"/>
        <dbReference type="ChEBI" id="CHEBI:15378"/>
        <dbReference type="ChEBI" id="CHEBI:15444"/>
        <dbReference type="ChEBI" id="CHEBI:57498"/>
        <dbReference type="ChEBI" id="CHEBI:456216"/>
        <dbReference type="EC" id="2.4.1.21"/>
    </reaction>
</comment>
<comment type="pathway">
    <text evidence="1">Glycan biosynthesis; glycogen biosynthesis.</text>
</comment>
<comment type="similarity">
    <text evidence="1">Belongs to the glycosyltransferase 1 family. Bacterial/plant glycogen synthase subfamily.</text>
</comment>
<comment type="sequence caution" evidence="2">
    <conflict type="erroneous initiation">
        <sequence resource="EMBL-CDS" id="ABA74290"/>
    </conflict>
</comment>
<organism>
    <name type="scientific">Pseudomonas fluorescens (strain Pf0-1)</name>
    <dbReference type="NCBI Taxonomy" id="205922"/>
    <lineage>
        <taxon>Bacteria</taxon>
        <taxon>Pseudomonadati</taxon>
        <taxon>Pseudomonadota</taxon>
        <taxon>Gammaproteobacteria</taxon>
        <taxon>Pseudomonadales</taxon>
        <taxon>Pseudomonadaceae</taxon>
        <taxon>Pseudomonas</taxon>
    </lineage>
</organism>